<feature type="signal peptide" evidence="3">
    <location>
        <begin position="1"/>
        <end position="31"/>
    </location>
</feature>
<feature type="propeptide" id="PRO_0000028816" evidence="1">
    <location>
        <begin position="32"/>
        <end position="119"/>
    </location>
</feature>
<feature type="chain" id="PRO_0000028817" description="Matrix metalloproteinase-16">
    <location>
        <begin position="120"/>
        <end position="607"/>
    </location>
</feature>
<feature type="topological domain" description="Extracellular" evidence="3">
    <location>
        <begin position="120"/>
        <end position="564"/>
    </location>
</feature>
<feature type="transmembrane region" description="Helical" evidence="3">
    <location>
        <begin position="565"/>
        <end position="585"/>
    </location>
</feature>
<feature type="topological domain" description="Cytoplasmic" evidence="3">
    <location>
        <begin position="586"/>
        <end position="607"/>
    </location>
</feature>
<feature type="repeat" description="Hemopexin 1">
    <location>
        <begin position="340"/>
        <end position="388"/>
    </location>
</feature>
<feature type="repeat" description="Hemopexin 2">
    <location>
        <begin position="389"/>
        <end position="434"/>
    </location>
</feature>
<feature type="repeat" description="Hemopexin 3">
    <location>
        <begin position="436"/>
        <end position="484"/>
    </location>
</feature>
<feature type="repeat" description="Hemopexin 4">
    <location>
        <begin position="485"/>
        <end position="532"/>
    </location>
</feature>
<feature type="region of interest" description="Disordered" evidence="5">
    <location>
        <begin position="281"/>
        <end position="340"/>
    </location>
</feature>
<feature type="short sequence motif" description="Cysteine switch" evidence="1">
    <location>
        <begin position="99"/>
        <end position="106"/>
    </location>
</feature>
<feature type="compositionally biased region" description="Pro residues" evidence="5">
    <location>
        <begin position="294"/>
        <end position="315"/>
    </location>
</feature>
<feature type="active site" evidence="4">
    <location>
        <position position="247"/>
    </location>
</feature>
<feature type="binding site" description="in inhibited form" evidence="1">
    <location>
        <position position="101"/>
    </location>
    <ligand>
        <name>Zn(2+)</name>
        <dbReference type="ChEBI" id="CHEBI:29105"/>
        <label>2</label>
        <note>catalytic</note>
    </ligand>
</feature>
<feature type="binding site" evidence="2">
    <location>
        <position position="183"/>
    </location>
    <ligand>
        <name>Ca(2+)</name>
        <dbReference type="ChEBI" id="CHEBI:29108"/>
        <label>1</label>
    </ligand>
</feature>
<feature type="binding site" evidence="2">
    <location>
        <position position="193"/>
    </location>
    <ligand>
        <name>Zn(2+)</name>
        <dbReference type="ChEBI" id="CHEBI:29105"/>
        <label>1</label>
        <note>structural</note>
    </ligand>
</feature>
<feature type="binding site" evidence="2">
    <location>
        <position position="195"/>
    </location>
    <ligand>
        <name>Zn(2+)</name>
        <dbReference type="ChEBI" id="CHEBI:29105"/>
        <label>1</label>
        <note>structural</note>
    </ligand>
</feature>
<feature type="binding site" evidence="2">
    <location>
        <position position="200"/>
    </location>
    <ligand>
        <name>Ca(2+)</name>
        <dbReference type="ChEBI" id="CHEBI:29108"/>
        <label>2</label>
    </ligand>
</feature>
<feature type="binding site" evidence="2">
    <location>
        <position position="201"/>
    </location>
    <ligand>
        <name>Ca(2+)</name>
        <dbReference type="ChEBI" id="CHEBI:29108"/>
        <label>2</label>
    </ligand>
</feature>
<feature type="binding site" evidence="2">
    <location>
        <position position="203"/>
    </location>
    <ligand>
        <name>Ca(2+)</name>
        <dbReference type="ChEBI" id="CHEBI:29108"/>
        <label>2</label>
    </ligand>
</feature>
<feature type="binding site" evidence="2">
    <location>
        <position position="205"/>
    </location>
    <ligand>
        <name>Ca(2+)</name>
        <dbReference type="ChEBI" id="CHEBI:29108"/>
        <label>2</label>
    </ligand>
</feature>
<feature type="binding site" evidence="2">
    <location>
        <position position="208"/>
    </location>
    <ligand>
        <name>Zn(2+)</name>
        <dbReference type="ChEBI" id="CHEBI:29105"/>
        <label>1</label>
        <note>structural</note>
    </ligand>
</feature>
<feature type="binding site" evidence="2">
    <location>
        <position position="215"/>
    </location>
    <ligand>
        <name>Ca(2+)</name>
        <dbReference type="ChEBI" id="CHEBI:29108"/>
        <label>1</label>
    </ligand>
</feature>
<feature type="binding site" evidence="1">
    <location>
        <position position="217"/>
    </location>
    <ligand>
        <name>Ca(2+)</name>
        <dbReference type="ChEBI" id="CHEBI:29108"/>
        <label>1</label>
    </ligand>
</feature>
<feature type="binding site" evidence="2">
    <location>
        <position position="219"/>
    </location>
    <ligand>
        <name>Ca(2+)</name>
        <dbReference type="ChEBI" id="CHEBI:29108"/>
        <label>1</label>
    </ligand>
</feature>
<feature type="binding site" evidence="2">
    <location>
        <position position="221"/>
    </location>
    <ligand>
        <name>Zn(2+)</name>
        <dbReference type="ChEBI" id="CHEBI:29105"/>
        <label>1</label>
        <note>structural</note>
    </ligand>
</feature>
<feature type="binding site" evidence="2">
    <location>
        <position position="223"/>
    </location>
    <ligand>
        <name>Ca(2+)</name>
        <dbReference type="ChEBI" id="CHEBI:29108"/>
        <label>2</label>
    </ligand>
</feature>
<feature type="binding site" evidence="2">
    <location>
        <position position="226"/>
    </location>
    <ligand>
        <name>Ca(2+)</name>
        <dbReference type="ChEBI" id="CHEBI:29108"/>
        <label>2</label>
    </ligand>
</feature>
<feature type="binding site" evidence="2">
    <location>
        <position position="246"/>
    </location>
    <ligand>
        <name>Zn(2+)</name>
        <dbReference type="ChEBI" id="CHEBI:29105"/>
        <label>2</label>
        <note>catalytic</note>
    </ligand>
</feature>
<feature type="binding site" evidence="2">
    <location>
        <position position="250"/>
    </location>
    <ligand>
        <name>Zn(2+)</name>
        <dbReference type="ChEBI" id="CHEBI:29105"/>
        <label>2</label>
        <note>catalytic</note>
    </ligand>
</feature>
<feature type="binding site" evidence="2">
    <location>
        <position position="256"/>
    </location>
    <ligand>
        <name>Zn(2+)</name>
        <dbReference type="ChEBI" id="CHEBI:29105"/>
        <label>2</label>
        <note>catalytic</note>
    </ligand>
</feature>
<feature type="glycosylation site" description="N-linked (GlcNAc...) asparagine" evidence="3">
    <location>
        <position position="83"/>
    </location>
</feature>
<feature type="disulfide bond" evidence="1">
    <location>
        <begin position="343"/>
        <end position="532"/>
    </location>
</feature>
<feature type="splice variant" id="VSP_005455" description="In isoform Short." evidence="6">
    <original>DDVDIVIKLDNTASTVKAIAIVIPCILALCLLVLVYTVFQFKRKGTPRHILYCKRSMQEWV</original>
    <variation>P</variation>
    <location>
        <begin position="547"/>
        <end position="607"/>
    </location>
</feature>
<dbReference type="EC" id="3.4.24.-"/>
<dbReference type="EMBL" id="D85509">
    <property type="protein sequence ID" value="BAA22224.1"/>
    <property type="molecule type" value="mRNA"/>
</dbReference>
<dbReference type="EMBL" id="D63886">
    <property type="protein sequence ID" value="BAA22223.1"/>
    <property type="molecule type" value="mRNA"/>
</dbReference>
<dbReference type="RefSeq" id="NP_542954.1">
    <property type="nucleotide sequence ID" value="NM_080776.1"/>
</dbReference>
<dbReference type="SMR" id="O35548"/>
<dbReference type="FunCoup" id="O35548">
    <property type="interactions" value="2437"/>
</dbReference>
<dbReference type="STRING" id="10116.ENSRNOP00000040229"/>
<dbReference type="MEROPS" id="M10.016"/>
<dbReference type="GlyCosmos" id="O35548">
    <property type="glycosylation" value="1 site, No reported glycans"/>
</dbReference>
<dbReference type="GlyGen" id="O35548">
    <property type="glycosylation" value="1 site"/>
</dbReference>
<dbReference type="iPTMnet" id="O35548"/>
<dbReference type="PhosphoSitePlus" id="O35548"/>
<dbReference type="PaxDb" id="10116-ENSRNOP00000040229"/>
<dbReference type="GeneID" id="65205"/>
<dbReference type="KEGG" id="rno:65205"/>
<dbReference type="UCSC" id="RGD:620199">
    <molecule id="O35548-1"/>
    <property type="organism name" value="rat"/>
</dbReference>
<dbReference type="AGR" id="RGD:620199"/>
<dbReference type="CTD" id="4325"/>
<dbReference type="RGD" id="620199">
    <property type="gene designation" value="Mmp16"/>
</dbReference>
<dbReference type="eggNOG" id="KOG1565">
    <property type="taxonomic scope" value="Eukaryota"/>
</dbReference>
<dbReference type="InParanoid" id="O35548"/>
<dbReference type="PhylomeDB" id="O35548"/>
<dbReference type="Reactome" id="R-RNO-1592389">
    <property type="pathway name" value="Activation of Matrix Metalloproteinases"/>
</dbReference>
<dbReference type="Reactome" id="R-RNO-9839383">
    <property type="pathway name" value="TGFBR3 PTM regulation"/>
</dbReference>
<dbReference type="PRO" id="PR:O35548"/>
<dbReference type="Proteomes" id="UP000002494">
    <property type="component" value="Unplaced"/>
</dbReference>
<dbReference type="GO" id="GO:0031012">
    <property type="term" value="C:extracellular matrix"/>
    <property type="evidence" value="ECO:0007669"/>
    <property type="project" value="InterPro"/>
</dbReference>
<dbReference type="GO" id="GO:0005615">
    <property type="term" value="C:extracellular space"/>
    <property type="evidence" value="ECO:0000318"/>
    <property type="project" value="GO_Central"/>
</dbReference>
<dbReference type="GO" id="GO:0005886">
    <property type="term" value="C:plasma membrane"/>
    <property type="evidence" value="ECO:0000266"/>
    <property type="project" value="RGD"/>
</dbReference>
<dbReference type="GO" id="GO:0070006">
    <property type="term" value="F:metalloaminopeptidase activity"/>
    <property type="evidence" value="ECO:0000266"/>
    <property type="project" value="RGD"/>
</dbReference>
<dbReference type="GO" id="GO:0004222">
    <property type="term" value="F:metalloendopeptidase activity"/>
    <property type="evidence" value="ECO:0000266"/>
    <property type="project" value="RGD"/>
</dbReference>
<dbReference type="GO" id="GO:0008270">
    <property type="term" value="F:zinc ion binding"/>
    <property type="evidence" value="ECO:0000266"/>
    <property type="project" value="RGD"/>
</dbReference>
<dbReference type="GO" id="GO:0060348">
    <property type="term" value="P:bone development"/>
    <property type="evidence" value="ECO:0000266"/>
    <property type="project" value="RGD"/>
</dbReference>
<dbReference type="GO" id="GO:0035988">
    <property type="term" value="P:chondrocyte proliferation"/>
    <property type="evidence" value="ECO:0000266"/>
    <property type="project" value="RGD"/>
</dbReference>
<dbReference type="GO" id="GO:0030574">
    <property type="term" value="P:collagen catabolic process"/>
    <property type="evidence" value="ECO:0000266"/>
    <property type="project" value="RGD"/>
</dbReference>
<dbReference type="GO" id="GO:0097094">
    <property type="term" value="P:craniofacial suture morphogenesis"/>
    <property type="evidence" value="ECO:0000266"/>
    <property type="project" value="RGD"/>
</dbReference>
<dbReference type="GO" id="GO:0048701">
    <property type="term" value="P:embryonic cranial skeleton morphogenesis"/>
    <property type="evidence" value="ECO:0000266"/>
    <property type="project" value="RGD"/>
</dbReference>
<dbReference type="GO" id="GO:0001958">
    <property type="term" value="P:endochondral ossification"/>
    <property type="evidence" value="ECO:0000266"/>
    <property type="project" value="RGD"/>
</dbReference>
<dbReference type="GO" id="GO:0030198">
    <property type="term" value="P:extracellular matrix organization"/>
    <property type="evidence" value="ECO:0000318"/>
    <property type="project" value="GO_Central"/>
</dbReference>
<dbReference type="GO" id="GO:0001503">
    <property type="term" value="P:ossification"/>
    <property type="evidence" value="ECO:0000266"/>
    <property type="project" value="RGD"/>
</dbReference>
<dbReference type="GO" id="GO:0016485">
    <property type="term" value="P:protein processing"/>
    <property type="evidence" value="ECO:0000266"/>
    <property type="project" value="RGD"/>
</dbReference>
<dbReference type="GO" id="GO:0006508">
    <property type="term" value="P:proteolysis"/>
    <property type="evidence" value="ECO:0000266"/>
    <property type="project" value="RGD"/>
</dbReference>
<dbReference type="GO" id="GO:1990834">
    <property type="term" value="P:response to odorant"/>
    <property type="evidence" value="ECO:0000270"/>
    <property type="project" value="RGD"/>
</dbReference>
<dbReference type="GO" id="GO:0001501">
    <property type="term" value="P:skeletal system development"/>
    <property type="evidence" value="ECO:0000318"/>
    <property type="project" value="GO_Central"/>
</dbReference>
<dbReference type="CDD" id="cd00094">
    <property type="entry name" value="HX"/>
    <property type="match status" value="1"/>
</dbReference>
<dbReference type="CDD" id="cd04278">
    <property type="entry name" value="ZnMc_MMP"/>
    <property type="match status" value="1"/>
</dbReference>
<dbReference type="FunFam" id="3.40.390.10:FF:000005">
    <property type="entry name" value="Matrix metallopeptidase 16"/>
    <property type="match status" value="1"/>
</dbReference>
<dbReference type="FunFam" id="2.110.10.10:FF:000001">
    <property type="entry name" value="Matrix metallopeptidase 24"/>
    <property type="match status" value="1"/>
</dbReference>
<dbReference type="Gene3D" id="3.40.390.10">
    <property type="entry name" value="Collagenase (Catalytic Domain)"/>
    <property type="match status" value="1"/>
</dbReference>
<dbReference type="Gene3D" id="2.110.10.10">
    <property type="entry name" value="Hemopexin-like domain"/>
    <property type="match status" value="1"/>
</dbReference>
<dbReference type="InterPro" id="IPR000585">
    <property type="entry name" value="Hemopexin-like_dom"/>
</dbReference>
<dbReference type="InterPro" id="IPR036375">
    <property type="entry name" value="Hemopexin-like_dom_sf"/>
</dbReference>
<dbReference type="InterPro" id="IPR018487">
    <property type="entry name" value="Hemopexin-like_repeat"/>
</dbReference>
<dbReference type="InterPro" id="IPR018486">
    <property type="entry name" value="Hemopexin_CS"/>
</dbReference>
<dbReference type="InterPro" id="IPR033739">
    <property type="entry name" value="M10A_MMP"/>
</dbReference>
<dbReference type="InterPro" id="IPR024079">
    <property type="entry name" value="MetalloPept_cat_dom_sf"/>
</dbReference>
<dbReference type="InterPro" id="IPR001818">
    <property type="entry name" value="Pept_M10_metallopeptidase"/>
</dbReference>
<dbReference type="InterPro" id="IPR021190">
    <property type="entry name" value="Pept_M10A"/>
</dbReference>
<dbReference type="InterPro" id="IPR021805">
    <property type="entry name" value="Pept_M10A_metallopeptidase_C"/>
</dbReference>
<dbReference type="InterPro" id="IPR021158">
    <property type="entry name" value="Pept_M10A_Zn_BS"/>
</dbReference>
<dbReference type="InterPro" id="IPR006026">
    <property type="entry name" value="Peptidase_Metallo"/>
</dbReference>
<dbReference type="InterPro" id="IPR002477">
    <property type="entry name" value="Peptidoglycan-bd-like"/>
</dbReference>
<dbReference type="InterPro" id="IPR036365">
    <property type="entry name" value="PGBD-like_sf"/>
</dbReference>
<dbReference type="PANTHER" id="PTHR10201">
    <property type="entry name" value="MATRIX METALLOPROTEINASE"/>
    <property type="match status" value="1"/>
</dbReference>
<dbReference type="PANTHER" id="PTHR10201:SF26">
    <property type="entry name" value="MATRIX METALLOPROTEINASE-16"/>
    <property type="match status" value="1"/>
</dbReference>
<dbReference type="Pfam" id="PF11857">
    <property type="entry name" value="DUF3377"/>
    <property type="match status" value="1"/>
</dbReference>
<dbReference type="Pfam" id="PF00045">
    <property type="entry name" value="Hemopexin"/>
    <property type="match status" value="4"/>
</dbReference>
<dbReference type="Pfam" id="PF00413">
    <property type="entry name" value="Peptidase_M10"/>
    <property type="match status" value="1"/>
</dbReference>
<dbReference type="Pfam" id="PF01471">
    <property type="entry name" value="PG_binding_1"/>
    <property type="match status" value="1"/>
</dbReference>
<dbReference type="PIRSF" id="PIRSF001191">
    <property type="entry name" value="Peptidase_M10A_matrix"/>
    <property type="match status" value="1"/>
</dbReference>
<dbReference type="PRINTS" id="PR00138">
    <property type="entry name" value="MATRIXIN"/>
</dbReference>
<dbReference type="SMART" id="SM00120">
    <property type="entry name" value="HX"/>
    <property type="match status" value="4"/>
</dbReference>
<dbReference type="SMART" id="SM00235">
    <property type="entry name" value="ZnMc"/>
    <property type="match status" value="1"/>
</dbReference>
<dbReference type="SUPFAM" id="SSF50923">
    <property type="entry name" value="Hemopexin-like domain"/>
    <property type="match status" value="1"/>
</dbReference>
<dbReference type="SUPFAM" id="SSF55486">
    <property type="entry name" value="Metalloproteases ('zincins'), catalytic domain"/>
    <property type="match status" value="1"/>
</dbReference>
<dbReference type="SUPFAM" id="SSF47090">
    <property type="entry name" value="PGBD-like"/>
    <property type="match status" value="1"/>
</dbReference>
<dbReference type="PROSITE" id="PS00546">
    <property type="entry name" value="CYSTEINE_SWITCH"/>
    <property type="match status" value="1"/>
</dbReference>
<dbReference type="PROSITE" id="PS00024">
    <property type="entry name" value="HEMOPEXIN"/>
    <property type="match status" value="1"/>
</dbReference>
<dbReference type="PROSITE" id="PS51642">
    <property type="entry name" value="HEMOPEXIN_2"/>
    <property type="match status" value="4"/>
</dbReference>
<dbReference type="PROSITE" id="PS00142">
    <property type="entry name" value="ZINC_PROTEASE"/>
    <property type="match status" value="1"/>
</dbReference>
<sequence length="607" mass="69624">MILLAFSSGRRLDFVHRSGVFFFQTLLWILCATVCGTEQYFNVEVWLQKYGYLPPTDPRMSVLRSAETMQSALAAMQQFYGINMTGKVDRNTIDWMKKPRCGVPDQTRGSSKFNIRRKRYALTGQKWQHKHITYSIKNVTPKVGDPETRRAIRRAFDVWQNVTPLTFEEVPYSELENGKRDVDITIIFASGFHGDRSPFDGEGGFLAHAYFPGPGIGGDTHFDSDEPWTLGNPNHDGNDLFLVAVHELGHALGLEHSNDPTAIMAPFYQYMETDNFKLPNDDLQGIQKIYGPPDKIPPPTRPLPTVPPHRSVPPADPRKNDRPKPPRPPTGRPSYPGAKPNICDGNFNTLAILRREMFVFKDQWFWRVRNNRVMDGYPMQITYFWRGLPPSIDAVYENSDGNFVFFKGNKYWVFKDTTLQPGYPHDLITLGNGIPPHGIDSAIWWEDVGKTYFFKGDRYWRYSEEMKTMDPGYPKPITIWKGIPESPQGAFVHKENGFTYFYKGKEYWKFNNQILKVEPGYPRSILKDFMGCDGPTDRDKEGLSPPDDVDIVIKLDNTASTVKAIAIVIPCILALCLLVLVYTVFQFKRKGTPRHILYCKRSMQEWV</sequence>
<comment type="function">
    <text>Endopeptidase that degrades various components of the extracellular matrix, such as collagen type III and fibronectin. Activates progelatinase A. Involved in the matrix remodeling of blood vessels. The short isoform efficiently converts progelatinase A to the intermediate form but not to the mature one. It has no effect on type I, II, IV and V collagen. However, upon interaction with CSPG4, it may be involved in degradation and invasion of type I collagen by melanoma cells.</text>
</comment>
<comment type="cofactor">
    <cofactor evidence="1">
        <name>Zn(2+)</name>
        <dbReference type="ChEBI" id="CHEBI:29105"/>
    </cofactor>
    <text evidence="1">Binds 2 zinc ions per subunit.</text>
</comment>
<comment type="cofactor">
    <cofactor evidence="1">
        <name>Ca(2+)</name>
        <dbReference type="ChEBI" id="CHEBI:29108"/>
    </cofactor>
</comment>
<comment type="subunit">
    <text evidence="1">Interacts with CSPG4 through CSPG4 chondroitin sulfate glycosaminoglycan.</text>
</comment>
<comment type="subcellular location">
    <subcellularLocation>
        <location evidence="6">Cell membrane</location>
        <topology evidence="6">Single-pass type I membrane protein</topology>
        <orientation evidence="6">Extracellular side</orientation>
    </subcellularLocation>
    <text evidence="1">Localized at the cell surface of melanoma cells.</text>
</comment>
<comment type="subcellular location">
    <molecule>Isoform Short</molecule>
    <subcellularLocation>
        <location>Secreted</location>
        <location>Extracellular space</location>
        <location>Extracellular matrix</location>
    </subcellularLocation>
</comment>
<comment type="alternative products">
    <event type="alternative splicing"/>
    <isoform>
        <id>O35548-1</id>
        <name>Long</name>
        <sequence type="displayed"/>
    </isoform>
    <isoform>
        <id>O35548-2</id>
        <name>Short</name>
        <name>MT3-MMP-del</name>
        <sequence type="described" ref="VSP_005455"/>
    </isoform>
</comment>
<comment type="tissue specificity">
    <text>Strongly expressed in the lung, brain and smooth muscle cells. Weakly detectable in the spleen and liver and indetectable in the heart, skeletal muscle and kidney.</text>
</comment>
<comment type="domain">
    <text>The conserved cysteine present in the cysteine-switch motif binds the catalytic zinc ion, thus inhibiting the enzyme. The dissociation of the cysteine from the zinc ion upon the activation-peptide release activates the enzyme.</text>
</comment>
<comment type="PTM">
    <text evidence="1">The precursor is cleaved by a furin endopeptidase.</text>
</comment>
<comment type="similarity">
    <text evidence="6">Belongs to the peptidase M10A family.</text>
</comment>
<name>MMP16_RAT</name>
<reference key="1">
    <citation type="journal article" date="1997" name="J. Biol. Chem.">
        <title>Expression of three membrane-type matrix metalloproteinases (MT-MMPs) in rat vascular smooth muscle cells and characterization of MT3-MMPs with and without transmembrane domain.</title>
        <authorList>
            <person name="Shofuda K."/>
            <person name="Yasumitsu H."/>
            <person name="Nishihashi A."/>
            <person name="Miki K."/>
            <person name="Miyazaki K."/>
        </authorList>
    </citation>
    <scope>NUCLEOTIDE SEQUENCE [MRNA]</scope>
    <scope>ALTERNATIVE SPLICING</scope>
    <source>
        <tissue>Smooth muscle</tissue>
    </source>
</reference>
<gene>
    <name type="primary">Mmp16</name>
</gene>
<organism>
    <name type="scientific">Rattus norvegicus</name>
    <name type="common">Rat</name>
    <dbReference type="NCBI Taxonomy" id="10116"/>
    <lineage>
        <taxon>Eukaryota</taxon>
        <taxon>Metazoa</taxon>
        <taxon>Chordata</taxon>
        <taxon>Craniata</taxon>
        <taxon>Vertebrata</taxon>
        <taxon>Euteleostomi</taxon>
        <taxon>Mammalia</taxon>
        <taxon>Eutheria</taxon>
        <taxon>Euarchontoglires</taxon>
        <taxon>Glires</taxon>
        <taxon>Rodentia</taxon>
        <taxon>Myomorpha</taxon>
        <taxon>Muroidea</taxon>
        <taxon>Muridae</taxon>
        <taxon>Murinae</taxon>
        <taxon>Rattus</taxon>
    </lineage>
</organism>
<protein>
    <recommendedName>
        <fullName>Matrix metalloproteinase-16</fullName>
        <shortName>MMP-16</shortName>
        <ecNumber>3.4.24.-</ecNumber>
    </recommendedName>
    <alternativeName>
        <fullName>Membrane-type matrix metalloproteinase 3</fullName>
        <shortName>MT-MMP 3</shortName>
        <shortName>MTMMP3</shortName>
    </alternativeName>
    <alternativeName>
        <fullName>Membrane-type-3 matrix metalloproteinase</fullName>
        <shortName>MT3-MMP</shortName>
        <shortName>MT3MMP</shortName>
    </alternativeName>
</protein>
<accession>O35548</accession>
<accession>O35541</accession>
<keyword id="KW-0025">Alternative splicing</keyword>
<keyword id="KW-0106">Calcium</keyword>
<keyword id="KW-1003">Cell membrane</keyword>
<keyword id="KW-0165">Cleavage on pair of basic residues</keyword>
<keyword id="KW-0177">Collagen degradation</keyword>
<keyword id="KW-1015">Disulfide bond</keyword>
<keyword id="KW-0272">Extracellular matrix</keyword>
<keyword id="KW-0325">Glycoprotein</keyword>
<keyword id="KW-0378">Hydrolase</keyword>
<keyword id="KW-0472">Membrane</keyword>
<keyword id="KW-0479">Metal-binding</keyword>
<keyword id="KW-0482">Metalloprotease</keyword>
<keyword id="KW-0645">Protease</keyword>
<keyword id="KW-1185">Reference proteome</keyword>
<keyword id="KW-0677">Repeat</keyword>
<keyword id="KW-0964">Secreted</keyword>
<keyword id="KW-0732">Signal</keyword>
<keyword id="KW-0812">Transmembrane</keyword>
<keyword id="KW-1133">Transmembrane helix</keyword>
<keyword id="KW-0862">Zinc</keyword>
<keyword id="KW-0865">Zymogen</keyword>
<evidence type="ECO:0000250" key="1"/>
<evidence type="ECO:0000250" key="2">
    <source>
        <dbReference type="UniProtKB" id="P51512"/>
    </source>
</evidence>
<evidence type="ECO:0000255" key="3"/>
<evidence type="ECO:0000255" key="4">
    <source>
        <dbReference type="PROSITE-ProRule" id="PRU10095"/>
    </source>
</evidence>
<evidence type="ECO:0000256" key="5">
    <source>
        <dbReference type="SAM" id="MobiDB-lite"/>
    </source>
</evidence>
<evidence type="ECO:0000305" key="6"/>
<proteinExistence type="evidence at transcript level"/>